<comment type="function">
    <text evidence="6">Serine/threonine protein kinase required for cell-type-specific transcription and signal transduction in yeast. It is thought that it phosphorylates the STE7 protein kinase which itself, phosphorylates the FUS3 and or KSS1 kinases.</text>
</comment>
<comment type="catalytic activity">
    <reaction>
        <text>L-seryl-[protein] + ATP = O-phospho-L-seryl-[protein] + ADP + H(+)</text>
        <dbReference type="Rhea" id="RHEA:17989"/>
        <dbReference type="Rhea" id="RHEA-COMP:9863"/>
        <dbReference type="Rhea" id="RHEA-COMP:11604"/>
        <dbReference type="ChEBI" id="CHEBI:15378"/>
        <dbReference type="ChEBI" id="CHEBI:29999"/>
        <dbReference type="ChEBI" id="CHEBI:30616"/>
        <dbReference type="ChEBI" id="CHEBI:83421"/>
        <dbReference type="ChEBI" id="CHEBI:456216"/>
        <dbReference type="EC" id="2.7.11.25"/>
    </reaction>
</comment>
<comment type="catalytic activity">
    <reaction>
        <text>L-threonyl-[protein] + ATP = O-phospho-L-threonyl-[protein] + ADP + H(+)</text>
        <dbReference type="Rhea" id="RHEA:46608"/>
        <dbReference type="Rhea" id="RHEA-COMP:11060"/>
        <dbReference type="Rhea" id="RHEA-COMP:11605"/>
        <dbReference type="ChEBI" id="CHEBI:15378"/>
        <dbReference type="ChEBI" id="CHEBI:30013"/>
        <dbReference type="ChEBI" id="CHEBI:30616"/>
        <dbReference type="ChEBI" id="CHEBI:61977"/>
        <dbReference type="ChEBI" id="CHEBI:456216"/>
        <dbReference type="EC" id="2.7.11.25"/>
    </reaction>
</comment>
<comment type="subunit">
    <text evidence="6 7 8 9">Homodimer (Probable). Interacts (via SAM domain) with STE50 (via SAM domain). Interacts with PBS2 and SHO1.</text>
</comment>
<comment type="interaction">
    <interactant intactId="EBI-18259">
        <id>P23561</id>
    </interactant>
    <interactant intactId="EBI-7193">
        <id>P16892</id>
        <label>FUS3</label>
    </interactant>
    <organismsDiffer>false</organismsDiffer>
    <experiments>6</experiments>
</comment>
<comment type="interaction">
    <interactant intactId="EBI-18259">
        <id>P23561</id>
    </interactant>
    <interactant intactId="EBI-9945">
        <id>P14681</id>
        <label>KSS1</label>
    </interactant>
    <organismsDiffer>false</organismsDiffer>
    <experiments>6</experiments>
</comment>
<comment type="interaction">
    <interactant intactId="EBI-18259">
        <id>P23561</id>
    </interactant>
    <interactant intactId="EBI-10968">
        <id>P32490</id>
        <label>MKK1</label>
    </interactant>
    <organismsDiffer>false</organismsDiffer>
    <experiments>2</experiments>
</comment>
<comment type="interaction">
    <interactant intactId="EBI-18259">
        <id>P23561</id>
    </interactant>
    <interactant intactId="EBI-18140">
        <id>P40073</id>
        <label>SHO1</label>
    </interactant>
    <organismsDiffer>false</organismsDiffer>
    <experiments>3</experiments>
</comment>
<comment type="interaction">
    <interactant intactId="EBI-18259">
        <id>P23561</id>
    </interactant>
    <interactant intactId="EBI-18259">
        <id>P23561</id>
        <label>STE11</label>
    </interactant>
    <organismsDiffer>false</organismsDiffer>
    <experiments>3</experiments>
</comment>
<comment type="interaction">
    <interactant intactId="EBI-18259">
        <id>P23561</id>
    </interactant>
    <interactant intactId="EBI-18373">
        <id>P32917</id>
        <label>STE5</label>
    </interactant>
    <organismsDiffer>false</organismsDiffer>
    <experiments>8</experiments>
</comment>
<comment type="interaction">
    <interactant intactId="EBI-18259">
        <id>P23561</id>
    </interactant>
    <interactant intactId="EBI-18305">
        <id>P25344</id>
        <label>STE50</label>
    </interactant>
    <organismsDiffer>false</organismsDiffer>
    <experiments>6</experiments>
</comment>
<comment type="miscellaneous">
    <text evidence="5">Present with 736 molecules/cell in log phase SD medium.</text>
</comment>
<comment type="similarity">
    <text evidence="9">Belongs to the protein kinase superfamily. STE Ser/Thr protein kinase family. MAP kinase kinase kinase subfamily.</text>
</comment>
<comment type="sequence caution" evidence="9">
    <conflict type="erroneous initiation">
        <sequence resource="EMBL-CDS" id="AAB67571"/>
    </conflict>
    <text>Extended N-terminus.</text>
</comment>
<proteinExistence type="evidence at protein level"/>
<evidence type="ECO:0000255" key="1">
    <source>
        <dbReference type="PROSITE-ProRule" id="PRU00159"/>
    </source>
</evidence>
<evidence type="ECO:0000255" key="2">
    <source>
        <dbReference type="PROSITE-ProRule" id="PRU00184"/>
    </source>
</evidence>
<evidence type="ECO:0000255" key="3">
    <source>
        <dbReference type="PROSITE-ProRule" id="PRU10027"/>
    </source>
</evidence>
<evidence type="ECO:0000256" key="4">
    <source>
        <dbReference type="SAM" id="MobiDB-lite"/>
    </source>
</evidence>
<evidence type="ECO:0000269" key="5">
    <source>
    </source>
</evidence>
<evidence type="ECO:0000269" key="6">
    <source>
    </source>
</evidence>
<evidence type="ECO:0000269" key="7">
    <source>
    </source>
</evidence>
<evidence type="ECO:0000269" key="8">
    <source>
    </source>
</evidence>
<evidence type="ECO:0000305" key="9"/>
<evidence type="ECO:0007744" key="10">
    <source>
    </source>
</evidence>
<evidence type="ECO:0007744" key="11">
    <source>
    </source>
</evidence>
<evidence type="ECO:0007744" key="12">
    <source>
    </source>
</evidence>
<evidence type="ECO:0007829" key="13">
    <source>
        <dbReference type="PDB" id="1OW5"/>
    </source>
</evidence>
<protein>
    <recommendedName>
        <fullName>Serine/threonine-protein kinase STE11</fullName>
        <ecNumber>2.7.11.25</ecNumber>
    </recommendedName>
</protein>
<keyword id="KW-0002">3D-structure</keyword>
<keyword id="KW-0067">ATP-binding</keyword>
<keyword id="KW-0418">Kinase</keyword>
<keyword id="KW-0547">Nucleotide-binding</keyword>
<keyword id="KW-0589">Pheromone response</keyword>
<keyword id="KW-0597">Phosphoprotein</keyword>
<keyword id="KW-1185">Reference proteome</keyword>
<keyword id="KW-0723">Serine/threonine-protein kinase</keyword>
<keyword id="KW-0808">Transferase</keyword>
<sequence length="717" mass="80721">MEQTQTAEGTDLLIGDEKTNDLPFVQLFLEEIGCTQYLDSFIQCNLVTEEEIKYLDKDILIALGVNKIGDRLKILRKSKSFQRDKRIEQVNRLKNLMEKVSSLSTATLSMNSELIPEKHCVIFILNDGSAKKVNVNGCFNADSIKKRLIRRLPHELLATNSNGEVTKMVQDYDVFVLDYTKNVLHLLYDVELVTICHANDRVEKNRLIFVSKDQTPSDKAISTSKKLYLRTLSALSQVGPSSSNLLAQNKGISHNNAEGKLRIDNTEKDRIRQIFNQRPPSEFISTNLAGYFPHTDMKRLQKTMRESFRHSARLSIAQRRPLSAESNNIGDILLKHSNAVDMALLQGLDQTRLSSKLDTTKIPKLAHKRPEDNDAISNQLELLSVESGEEEDHDFFGEDSDIVSLPTKIATPKNWLKGACIGSGSFGSVYLGMNAHTGELMAVKQVEIKNNNIGVPTDNNKQANSDENNEQEEQQEKIEDVGAVSHPKTNQNIHRKMVDALQHEMNLLKELHHENIVTYYGASQEGGNLNIFLEYVPGGSVSSMLNNYGPFEESLITNFTRQILIGVAYLHKKNIIHRDIKGANILIDIKGCVKITDFGISKKLSPLNKKQNKRASLQGSVFWMSPEVVKQTATTAKADIWSTGCVVIEMFTGKHPFPDFSQMQAIFKIGTNTTPEIPSWATSEGKNFLRKAFELDYQYRPSALELLQHPWLDAHII</sequence>
<accession>P23561</accession>
<accession>D6VZ00</accession>
<name>STE11_YEAST</name>
<reference key="1">
    <citation type="journal article" date="1990" name="Genes Dev.">
        <title>STE11 is a protein kinase required for cell-type-specific transcription and signal transduction in yeast.</title>
        <authorList>
            <person name="Rhodes N."/>
            <person name="Connell L."/>
            <person name="Errede B."/>
        </authorList>
    </citation>
    <scope>NUCLEOTIDE SEQUENCE [GENOMIC DNA]</scope>
    <scope>IDENTIFICATION OF INITIATION SITE</scope>
</reference>
<reference key="2">
    <citation type="journal article" date="1997" name="Nature">
        <title>The nucleotide sequence of Saccharomyces cerevisiae chromosome XII.</title>
        <authorList>
            <person name="Johnston M."/>
            <person name="Hillier L.W."/>
            <person name="Riles L."/>
            <person name="Albermann K."/>
            <person name="Andre B."/>
            <person name="Ansorge W."/>
            <person name="Benes V."/>
            <person name="Brueckner M."/>
            <person name="Delius H."/>
            <person name="Dubois E."/>
            <person name="Duesterhoeft A."/>
            <person name="Entian K.-D."/>
            <person name="Floeth M."/>
            <person name="Goffeau A."/>
            <person name="Hebling U."/>
            <person name="Heumann K."/>
            <person name="Heuss-Neitzel D."/>
            <person name="Hilbert H."/>
            <person name="Hilger F."/>
            <person name="Kleine K."/>
            <person name="Koetter P."/>
            <person name="Louis E.J."/>
            <person name="Messenguy F."/>
            <person name="Mewes H.-W."/>
            <person name="Miosga T."/>
            <person name="Moestl D."/>
            <person name="Mueller-Auer S."/>
            <person name="Nentwich U."/>
            <person name="Obermaier B."/>
            <person name="Piravandi E."/>
            <person name="Pohl T.M."/>
            <person name="Portetelle D."/>
            <person name="Purnelle B."/>
            <person name="Rechmann S."/>
            <person name="Rieger M."/>
            <person name="Rinke M."/>
            <person name="Rose M."/>
            <person name="Scharfe M."/>
            <person name="Scherens B."/>
            <person name="Scholler P."/>
            <person name="Schwager C."/>
            <person name="Schwarz S."/>
            <person name="Underwood A.P."/>
            <person name="Urrestarazu L.A."/>
            <person name="Vandenbol M."/>
            <person name="Verhasselt P."/>
            <person name="Vierendeels F."/>
            <person name="Voet M."/>
            <person name="Volckaert G."/>
            <person name="Voss H."/>
            <person name="Wambutt R."/>
            <person name="Wedler E."/>
            <person name="Wedler H."/>
            <person name="Zimmermann F.K."/>
            <person name="Zollner A."/>
            <person name="Hani J."/>
            <person name="Hoheisel J.D."/>
        </authorList>
    </citation>
    <scope>NUCLEOTIDE SEQUENCE [LARGE SCALE GENOMIC DNA]</scope>
    <source>
        <strain>ATCC 204508 / S288c</strain>
    </source>
</reference>
<reference key="3">
    <citation type="journal article" date="2014" name="G3 (Bethesda)">
        <title>The reference genome sequence of Saccharomyces cerevisiae: Then and now.</title>
        <authorList>
            <person name="Engel S.R."/>
            <person name="Dietrich F.S."/>
            <person name="Fisk D.G."/>
            <person name="Binkley G."/>
            <person name="Balakrishnan R."/>
            <person name="Costanzo M.C."/>
            <person name="Dwight S.S."/>
            <person name="Hitz B.C."/>
            <person name="Karra K."/>
            <person name="Nash R.S."/>
            <person name="Weng S."/>
            <person name="Wong E.D."/>
            <person name="Lloyd P."/>
            <person name="Skrzypek M.S."/>
            <person name="Miyasato S.R."/>
            <person name="Simison M."/>
            <person name="Cherry J.M."/>
        </authorList>
    </citation>
    <scope>GENOME REANNOTATION</scope>
    <source>
        <strain>ATCC 204508 / S288c</strain>
    </source>
</reference>
<reference key="4">
    <citation type="journal article" date="1992" name="Genes Dev.">
        <title>Order of action of components in the yeast pheromone response pathway revealed with a dominant allele of the STE11 kinase and the multiple phosphorylation of the STE7 kinase.</title>
        <authorList>
            <person name="Cairns B.R."/>
            <person name="Ramer S.W."/>
            <person name="Kornberg K.D."/>
        </authorList>
    </citation>
    <scope>POSSIBLE FUNCTION</scope>
</reference>
<reference key="5">
    <citation type="journal article" date="2003" name="Nature">
        <title>Global analysis of protein expression in yeast.</title>
        <authorList>
            <person name="Ghaemmaghami S."/>
            <person name="Huh W.-K."/>
            <person name="Bower K."/>
            <person name="Howson R.W."/>
            <person name="Belle A."/>
            <person name="Dephoure N."/>
            <person name="O'Shea E.K."/>
            <person name="Weissman J.S."/>
        </authorList>
    </citation>
    <scope>LEVEL OF PROTEIN EXPRESSION [LARGE SCALE ANALYSIS]</scope>
</reference>
<reference key="6">
    <citation type="journal article" date="2004" name="Mol. Cell">
        <title>Sho1 and Pbs2 act as coscaffolds linking components in the yeast high osmolarity MAP kinase pathway.</title>
        <authorList>
            <person name="Zarrinpar A."/>
            <person name="Bhattacharyya R.P."/>
            <person name="Nittler M.P."/>
            <person name="Lim W.A."/>
        </authorList>
    </citation>
    <scope>FUNCTION</scope>
    <scope>INTERACTION WITH PBS2 AND SHO1</scope>
</reference>
<reference key="7">
    <citation type="journal article" date="2007" name="J. Proteome Res.">
        <title>Large-scale phosphorylation analysis of alpha-factor-arrested Saccharomyces cerevisiae.</title>
        <authorList>
            <person name="Li X."/>
            <person name="Gerber S.A."/>
            <person name="Rudner A.D."/>
            <person name="Beausoleil S.A."/>
            <person name="Haas W."/>
            <person name="Villen J."/>
            <person name="Elias J.E."/>
            <person name="Gygi S.P."/>
        </authorList>
    </citation>
    <scope>PHOSPHORYLATION [LARGE SCALE ANALYSIS] AT SER-323</scope>
    <scope>IDENTIFICATION BY MASS SPECTROMETRY [LARGE SCALE ANALYSIS]</scope>
    <source>
        <strain>ADR376</strain>
    </source>
</reference>
<reference key="8">
    <citation type="journal article" date="2008" name="Mol. Cell. Proteomics">
        <title>A multidimensional chromatography technology for in-depth phosphoproteome analysis.</title>
        <authorList>
            <person name="Albuquerque C.P."/>
            <person name="Smolka M.B."/>
            <person name="Payne S.H."/>
            <person name="Bafna V."/>
            <person name="Eng J."/>
            <person name="Zhou H."/>
        </authorList>
    </citation>
    <scope>PHOSPHORYLATION [LARGE SCALE ANALYSIS] AT SER-323</scope>
    <scope>IDENTIFICATION BY MASS SPECTROMETRY [LARGE SCALE ANALYSIS]</scope>
</reference>
<reference key="9">
    <citation type="journal article" date="2009" name="Science">
        <title>Global analysis of Cdk1 substrate phosphorylation sites provides insights into evolution.</title>
        <authorList>
            <person name="Holt L.J."/>
            <person name="Tuch B.B."/>
            <person name="Villen J."/>
            <person name="Johnson A.D."/>
            <person name="Gygi S.P."/>
            <person name="Morgan D.O."/>
        </authorList>
    </citation>
    <scope>PHOSPHORYLATION [LARGE SCALE ANALYSIS] AT SER-465</scope>
    <scope>IDENTIFICATION BY MASS SPECTROMETRY [LARGE SCALE ANALYSIS]</scope>
</reference>
<reference key="10">
    <citation type="journal article" date="2004" name="J. Mol. Biol.">
        <title>The solution structure of the S.cerevisiae Ste11 MAPKKK SAM domain and its partnership with Ste50.</title>
        <authorList>
            <person name="Kwan J.J."/>
            <person name="Warner N."/>
            <person name="Pawson T."/>
            <person name="Donaldson L.W."/>
        </authorList>
    </citation>
    <scope>STRUCTURE BY NMR OF 15-92</scope>
    <scope>INTERACTION WITH STE50</scope>
    <scope>MUTAGENESIS OF ILE-59</scope>
</reference>
<reference key="11">
    <citation type="journal article" date="2004" name="J. Mol. Biol.">
        <title>Solution structure of the dimeric SAM domain of MAPKKK Ste11 and its interactions with the adaptor protein Ste50 from the budding yeast: implications for Ste11 activation and signal transmission through the Ste50-Ste11 complex.</title>
        <authorList>
            <person name="Bhattacharjya S."/>
            <person name="Xu P."/>
            <person name="Gingras R."/>
            <person name="Shaykhutdinov R."/>
            <person name="Wu C."/>
            <person name="Whiteway M."/>
            <person name="Ni F."/>
        </authorList>
    </citation>
    <scope>STRUCTURE BY NMR OF 16-83</scope>
    <scope>SUBUNIT</scope>
    <scope>INTERACTION WITH STE50</scope>
</reference>
<organism>
    <name type="scientific">Saccharomyces cerevisiae (strain ATCC 204508 / S288c)</name>
    <name type="common">Baker's yeast</name>
    <dbReference type="NCBI Taxonomy" id="559292"/>
    <lineage>
        <taxon>Eukaryota</taxon>
        <taxon>Fungi</taxon>
        <taxon>Dikarya</taxon>
        <taxon>Ascomycota</taxon>
        <taxon>Saccharomycotina</taxon>
        <taxon>Saccharomycetes</taxon>
        <taxon>Saccharomycetales</taxon>
        <taxon>Saccharomycetaceae</taxon>
        <taxon>Saccharomyces</taxon>
    </lineage>
</organism>
<feature type="chain" id="PRO_0000086684" description="Serine/threonine-protein kinase STE11">
    <location>
        <begin position="1"/>
        <end position="717"/>
    </location>
</feature>
<feature type="domain" description="SAM" evidence="2">
    <location>
        <begin position="20"/>
        <end position="84"/>
    </location>
</feature>
<feature type="domain" description="Protein kinase" evidence="1">
    <location>
        <begin position="415"/>
        <end position="712"/>
    </location>
</feature>
<feature type="region of interest" description="Disordered" evidence="4">
    <location>
        <begin position="452"/>
        <end position="481"/>
    </location>
</feature>
<feature type="compositionally biased region" description="Polar residues" evidence="4">
    <location>
        <begin position="452"/>
        <end position="466"/>
    </location>
</feature>
<feature type="active site" description="Proton acceptor" evidence="1 3">
    <location>
        <position position="579"/>
    </location>
</feature>
<feature type="binding site" evidence="1">
    <location>
        <begin position="421"/>
        <end position="429"/>
    </location>
    <ligand>
        <name>ATP</name>
        <dbReference type="ChEBI" id="CHEBI:30616"/>
    </ligand>
</feature>
<feature type="binding site" evidence="1">
    <location>
        <position position="444"/>
    </location>
    <ligand>
        <name>ATP</name>
        <dbReference type="ChEBI" id="CHEBI:30616"/>
    </ligand>
</feature>
<feature type="modified residue" description="Phosphoserine" evidence="10 11">
    <location>
        <position position="323"/>
    </location>
</feature>
<feature type="modified residue" description="Phosphoserine" evidence="12">
    <location>
        <position position="465"/>
    </location>
</feature>
<feature type="mutagenesis site" description="Disrupts interaction with STE50 and abolishes signal transduction." evidence="7">
    <original>I</original>
    <variation>R</variation>
    <location>
        <position position="59"/>
    </location>
</feature>
<feature type="helix" evidence="13">
    <location>
        <begin position="24"/>
        <end position="32"/>
    </location>
</feature>
<feature type="helix" evidence="13">
    <location>
        <begin position="36"/>
        <end position="44"/>
    </location>
</feature>
<feature type="helix" evidence="13">
    <location>
        <begin position="49"/>
        <end position="54"/>
    </location>
</feature>
<feature type="helix" evidence="13">
    <location>
        <begin position="57"/>
        <end position="63"/>
    </location>
</feature>
<feature type="helix" evidence="13">
    <location>
        <begin position="68"/>
        <end position="80"/>
    </location>
</feature>
<dbReference type="EC" id="2.7.11.25"/>
<dbReference type="EMBL" id="X53431">
    <property type="protein sequence ID" value="CAA37522.1"/>
    <property type="molecule type" value="Genomic_DNA"/>
</dbReference>
<dbReference type="EMBL" id="U19103">
    <property type="protein sequence ID" value="AAB67571.1"/>
    <property type="status" value="ALT_INIT"/>
    <property type="molecule type" value="Genomic_DNA"/>
</dbReference>
<dbReference type="EMBL" id="BK006945">
    <property type="protein sequence ID" value="DAA09666.1"/>
    <property type="molecule type" value="Genomic_DNA"/>
</dbReference>
<dbReference type="PIR" id="S51380">
    <property type="entry name" value="S51380"/>
</dbReference>
<dbReference type="RefSeq" id="NP_013466.1">
    <property type="nucleotide sequence ID" value="NM_001182251.1"/>
</dbReference>
<dbReference type="PDB" id="1OW5">
    <property type="method" value="NMR"/>
    <property type="chains" value="A=15-92"/>
</dbReference>
<dbReference type="PDB" id="1X9X">
    <property type="method" value="NMR"/>
    <property type="chains" value="A/B=16-83"/>
</dbReference>
<dbReference type="PDBsum" id="1OW5"/>
<dbReference type="PDBsum" id="1X9X"/>
<dbReference type="BMRB" id="P23561"/>
<dbReference type="SMR" id="P23561"/>
<dbReference type="BioGRID" id="31623">
    <property type="interactions" value="134"/>
</dbReference>
<dbReference type="DIP" id="DIP-861N"/>
<dbReference type="FunCoup" id="P23561">
    <property type="interactions" value="271"/>
</dbReference>
<dbReference type="IntAct" id="P23561">
    <property type="interactions" value="26"/>
</dbReference>
<dbReference type="MINT" id="P23561"/>
<dbReference type="STRING" id="4932.YLR362W"/>
<dbReference type="CarbonylDB" id="P23561"/>
<dbReference type="iPTMnet" id="P23561"/>
<dbReference type="PaxDb" id="4932-YLR362W"/>
<dbReference type="PeptideAtlas" id="P23561"/>
<dbReference type="EnsemblFungi" id="YLR362W_mRNA">
    <property type="protein sequence ID" value="YLR362W"/>
    <property type="gene ID" value="YLR362W"/>
</dbReference>
<dbReference type="GeneID" id="851076"/>
<dbReference type="KEGG" id="sce:YLR362W"/>
<dbReference type="AGR" id="SGD:S000004354"/>
<dbReference type="SGD" id="S000004354">
    <property type="gene designation" value="STE11"/>
</dbReference>
<dbReference type="VEuPathDB" id="FungiDB:YLR362W"/>
<dbReference type="eggNOG" id="KOG0198">
    <property type="taxonomic scope" value="Eukaryota"/>
</dbReference>
<dbReference type="GeneTree" id="ENSGT00940000160383"/>
<dbReference type="HOGENOM" id="CLU_003051_2_1_1"/>
<dbReference type="InParanoid" id="P23561"/>
<dbReference type="OMA" id="CFNADSI"/>
<dbReference type="OrthoDB" id="266718at2759"/>
<dbReference type="BioCyc" id="YEAST:G3O-32433-MONOMER"/>
<dbReference type="BRENDA" id="2.7.11.25">
    <property type="organism ID" value="984"/>
</dbReference>
<dbReference type="Reactome" id="R-SCE-2559580">
    <property type="pathway name" value="Oxidative Stress Induced Senescence"/>
</dbReference>
<dbReference type="BioGRID-ORCS" id="851076">
    <property type="hits" value="1 hit in 13 CRISPR screens"/>
</dbReference>
<dbReference type="EvolutionaryTrace" id="P23561"/>
<dbReference type="PRO" id="PR:P23561"/>
<dbReference type="Proteomes" id="UP000002311">
    <property type="component" value="Chromosome XII"/>
</dbReference>
<dbReference type="RNAct" id="P23561">
    <property type="molecule type" value="protein"/>
</dbReference>
<dbReference type="GO" id="GO:0005737">
    <property type="term" value="C:cytoplasm"/>
    <property type="evidence" value="ECO:0000314"/>
    <property type="project" value="SGD"/>
</dbReference>
<dbReference type="GO" id="GO:0005524">
    <property type="term" value="F:ATP binding"/>
    <property type="evidence" value="ECO:0007669"/>
    <property type="project" value="UniProtKB-KW"/>
</dbReference>
<dbReference type="GO" id="GO:0042802">
    <property type="term" value="F:identical protein binding"/>
    <property type="evidence" value="ECO:0000353"/>
    <property type="project" value="IntAct"/>
</dbReference>
<dbReference type="GO" id="GO:0004709">
    <property type="term" value="F:MAP kinase kinase kinase activity"/>
    <property type="evidence" value="ECO:0000314"/>
    <property type="project" value="SGD"/>
</dbReference>
<dbReference type="GO" id="GO:0004672">
    <property type="term" value="F:protein kinase activity"/>
    <property type="evidence" value="ECO:0007005"/>
    <property type="project" value="SGD"/>
</dbReference>
<dbReference type="GO" id="GO:0106310">
    <property type="term" value="F:protein serine kinase activity"/>
    <property type="evidence" value="ECO:0007669"/>
    <property type="project" value="RHEA"/>
</dbReference>
<dbReference type="GO" id="GO:0032093">
    <property type="term" value="F:SAM domain binding"/>
    <property type="evidence" value="ECO:0000314"/>
    <property type="project" value="SGD"/>
</dbReference>
<dbReference type="GO" id="GO:0000196">
    <property type="term" value="P:cell integrity MAPK cascade"/>
    <property type="evidence" value="ECO:0000316"/>
    <property type="project" value="SGD"/>
</dbReference>
<dbReference type="GO" id="GO:0071474">
    <property type="term" value="P:cellular hyperosmotic response"/>
    <property type="evidence" value="ECO:0000315"/>
    <property type="project" value="SGD"/>
</dbReference>
<dbReference type="GO" id="GO:0001403">
    <property type="term" value="P:invasive growth in response to glucose limitation"/>
    <property type="evidence" value="ECO:0000315"/>
    <property type="project" value="SGD"/>
</dbReference>
<dbReference type="GO" id="GO:0007254">
    <property type="term" value="P:JNK cascade"/>
    <property type="evidence" value="ECO:0000318"/>
    <property type="project" value="GO_Central"/>
</dbReference>
<dbReference type="GO" id="GO:0007232">
    <property type="term" value="P:osmosensory signaling pathway via Sho1 osmosensor"/>
    <property type="evidence" value="ECO:0000316"/>
    <property type="project" value="SGD"/>
</dbReference>
<dbReference type="GO" id="GO:0038066">
    <property type="term" value="P:p38MAPK cascade"/>
    <property type="evidence" value="ECO:0000315"/>
    <property type="project" value="SGD"/>
</dbReference>
<dbReference type="GO" id="GO:0071507">
    <property type="term" value="P:pheromone response MAPK cascade"/>
    <property type="evidence" value="ECO:0000314"/>
    <property type="project" value="SGD"/>
</dbReference>
<dbReference type="GO" id="GO:0000750">
    <property type="term" value="P:pheromone-dependent signal transduction involved in conjugation with cellular fusion"/>
    <property type="evidence" value="ECO:0000315"/>
    <property type="project" value="SGD"/>
</dbReference>
<dbReference type="GO" id="GO:0007124">
    <property type="term" value="P:pseudohyphal growth"/>
    <property type="evidence" value="ECO:0000315"/>
    <property type="project" value="SGD"/>
</dbReference>
<dbReference type="GO" id="GO:0001402">
    <property type="term" value="P:signal transduction involved in filamentous growth"/>
    <property type="evidence" value="ECO:0000315"/>
    <property type="project" value="SGD"/>
</dbReference>
<dbReference type="CDD" id="cd09534">
    <property type="entry name" value="SAM_Ste11_fungal"/>
    <property type="match status" value="1"/>
</dbReference>
<dbReference type="FunFam" id="3.10.20.90:FF:000272">
    <property type="entry name" value="Serine/threonine-protein kinase STE11"/>
    <property type="match status" value="1"/>
</dbReference>
<dbReference type="Gene3D" id="3.10.20.90">
    <property type="entry name" value="Phosphatidylinositol 3-kinase Catalytic Subunit, Chain A, domain 1"/>
    <property type="match status" value="1"/>
</dbReference>
<dbReference type="Gene3D" id="3.30.200.20">
    <property type="entry name" value="Phosphorylase Kinase, domain 1"/>
    <property type="match status" value="1"/>
</dbReference>
<dbReference type="Gene3D" id="1.10.150.50">
    <property type="entry name" value="Transcription Factor, Ets-1"/>
    <property type="match status" value="1"/>
</dbReference>
<dbReference type="Gene3D" id="1.10.510.10">
    <property type="entry name" value="Transferase(Phosphotransferase) domain 1"/>
    <property type="match status" value="1"/>
</dbReference>
<dbReference type="InterPro" id="IPR011009">
    <property type="entry name" value="Kinase-like_dom_sf"/>
</dbReference>
<dbReference type="InterPro" id="IPR000719">
    <property type="entry name" value="Prot_kinase_dom"/>
</dbReference>
<dbReference type="InterPro" id="IPR017441">
    <property type="entry name" value="Protein_kinase_ATP_BS"/>
</dbReference>
<dbReference type="InterPro" id="IPR029458">
    <property type="entry name" value="Ras-bd_By2"/>
</dbReference>
<dbReference type="InterPro" id="IPR001660">
    <property type="entry name" value="SAM"/>
</dbReference>
<dbReference type="InterPro" id="IPR013761">
    <property type="entry name" value="SAM/pointed_sf"/>
</dbReference>
<dbReference type="InterPro" id="IPR008271">
    <property type="entry name" value="Ser/Thr_kinase_AS"/>
</dbReference>
<dbReference type="PANTHER" id="PTHR11584:SF369">
    <property type="entry name" value="MITOGEN-ACTIVATED PROTEIN KINASE KINASE KINASE 19-RELATED"/>
    <property type="match status" value="1"/>
</dbReference>
<dbReference type="PANTHER" id="PTHR11584">
    <property type="entry name" value="SERINE/THREONINE PROTEIN KINASE"/>
    <property type="match status" value="1"/>
</dbReference>
<dbReference type="Pfam" id="PF00069">
    <property type="entry name" value="Pkinase"/>
    <property type="match status" value="1"/>
</dbReference>
<dbReference type="Pfam" id="PF14847">
    <property type="entry name" value="Ras_bdg_2"/>
    <property type="match status" value="1"/>
</dbReference>
<dbReference type="Pfam" id="PF07647">
    <property type="entry name" value="SAM_2"/>
    <property type="match status" value="1"/>
</dbReference>
<dbReference type="SMART" id="SM01304">
    <property type="entry name" value="Ras_bdg_2"/>
    <property type="match status" value="1"/>
</dbReference>
<dbReference type="SMART" id="SM00220">
    <property type="entry name" value="S_TKc"/>
    <property type="match status" value="1"/>
</dbReference>
<dbReference type="SMART" id="SM00454">
    <property type="entry name" value="SAM"/>
    <property type="match status" value="1"/>
</dbReference>
<dbReference type="SUPFAM" id="SSF56112">
    <property type="entry name" value="Protein kinase-like (PK-like)"/>
    <property type="match status" value="1"/>
</dbReference>
<dbReference type="SUPFAM" id="SSF47769">
    <property type="entry name" value="SAM/Pointed domain"/>
    <property type="match status" value="1"/>
</dbReference>
<dbReference type="PROSITE" id="PS00107">
    <property type="entry name" value="PROTEIN_KINASE_ATP"/>
    <property type="match status" value="1"/>
</dbReference>
<dbReference type="PROSITE" id="PS50011">
    <property type="entry name" value="PROTEIN_KINASE_DOM"/>
    <property type="match status" value="1"/>
</dbReference>
<dbReference type="PROSITE" id="PS00108">
    <property type="entry name" value="PROTEIN_KINASE_ST"/>
    <property type="match status" value="1"/>
</dbReference>
<dbReference type="PROSITE" id="PS50105">
    <property type="entry name" value="SAM_DOMAIN"/>
    <property type="match status" value="1"/>
</dbReference>
<gene>
    <name type="primary">STE11</name>
    <name type="ordered locus">YLR362W</name>
    <name type="ORF">L8039.10</name>
</gene>